<evidence type="ECO:0000255" key="1">
    <source>
        <dbReference type="HAMAP-Rule" id="MF_03152"/>
    </source>
</evidence>
<evidence type="ECO:0000256" key="2">
    <source>
        <dbReference type="SAM" id="MobiDB-lite"/>
    </source>
</evidence>
<evidence type="ECO:0000305" key="3"/>
<organism>
    <name type="scientific">Aedes aegypti</name>
    <name type="common">Yellowfever mosquito</name>
    <name type="synonym">Culex aegypti</name>
    <dbReference type="NCBI Taxonomy" id="7159"/>
    <lineage>
        <taxon>Eukaryota</taxon>
        <taxon>Metazoa</taxon>
        <taxon>Ecdysozoa</taxon>
        <taxon>Arthropoda</taxon>
        <taxon>Hexapoda</taxon>
        <taxon>Insecta</taxon>
        <taxon>Pterygota</taxon>
        <taxon>Neoptera</taxon>
        <taxon>Endopterygota</taxon>
        <taxon>Diptera</taxon>
        <taxon>Nematocera</taxon>
        <taxon>Culicoidea</taxon>
        <taxon>Culicidae</taxon>
        <taxon>Culicinae</taxon>
        <taxon>Aedini</taxon>
        <taxon>Aedes</taxon>
        <taxon>Stegomyia</taxon>
    </lineage>
</organism>
<accession>Q16VC0</accession>
<keyword id="KW-0963">Cytoplasm</keyword>
<keyword id="KW-0489">Methyltransferase</keyword>
<keyword id="KW-0496">Mitochondrion</keyword>
<keyword id="KW-0539">Nucleus</keyword>
<keyword id="KW-1185">Reference proteome</keyword>
<keyword id="KW-0949">S-adenosyl-L-methionine</keyword>
<keyword id="KW-0808">Transferase</keyword>
<keyword id="KW-0809">Transit peptide</keyword>
<keyword id="KW-0819">tRNA processing</keyword>
<name>TRM5_AEDAE</name>
<proteinExistence type="inferred from homology"/>
<reference key="1">
    <citation type="journal article" date="2007" name="Science">
        <title>Genome sequence of Aedes aegypti, a major arbovirus vector.</title>
        <authorList>
            <person name="Nene V."/>
            <person name="Wortman J.R."/>
            <person name="Lawson D."/>
            <person name="Haas B.J."/>
            <person name="Kodira C.D."/>
            <person name="Tu Z.J."/>
            <person name="Loftus B.J."/>
            <person name="Xi Z."/>
            <person name="Megy K."/>
            <person name="Grabherr M."/>
            <person name="Ren Q."/>
            <person name="Zdobnov E.M."/>
            <person name="Lobo N.F."/>
            <person name="Campbell K.S."/>
            <person name="Brown S.E."/>
            <person name="Bonaldo M.F."/>
            <person name="Zhu J."/>
            <person name="Sinkins S.P."/>
            <person name="Hogenkamp D.G."/>
            <person name="Amedeo P."/>
            <person name="Arensburger P."/>
            <person name="Atkinson P.W."/>
            <person name="Bidwell S.L."/>
            <person name="Biedler J."/>
            <person name="Birney E."/>
            <person name="Bruggner R.V."/>
            <person name="Costas J."/>
            <person name="Coy M.R."/>
            <person name="Crabtree J."/>
            <person name="Crawford M."/>
            <person name="DeBruyn B."/>
            <person name="DeCaprio D."/>
            <person name="Eiglmeier K."/>
            <person name="Eisenstadt E."/>
            <person name="El-Dorry H."/>
            <person name="Gelbart W.M."/>
            <person name="Gomes S.L."/>
            <person name="Hammond M."/>
            <person name="Hannick L.I."/>
            <person name="Hogan J.R."/>
            <person name="Holmes M.H."/>
            <person name="Jaffe D."/>
            <person name="Johnston S.J."/>
            <person name="Kennedy R.C."/>
            <person name="Koo H."/>
            <person name="Kravitz S."/>
            <person name="Kriventseva E.V."/>
            <person name="Kulp D."/>
            <person name="Labutti K."/>
            <person name="Lee E."/>
            <person name="Li S."/>
            <person name="Lovin D.D."/>
            <person name="Mao C."/>
            <person name="Mauceli E."/>
            <person name="Menck C.F."/>
            <person name="Miller J.R."/>
            <person name="Montgomery P."/>
            <person name="Mori A."/>
            <person name="Nascimento A.L."/>
            <person name="Naveira H.F."/>
            <person name="Nusbaum C."/>
            <person name="O'Leary S.B."/>
            <person name="Orvis J."/>
            <person name="Pertea M."/>
            <person name="Quesneville H."/>
            <person name="Reidenbach K.R."/>
            <person name="Rogers Y.-H.C."/>
            <person name="Roth C.W."/>
            <person name="Schneider J.R."/>
            <person name="Schatz M."/>
            <person name="Shumway M."/>
            <person name="Stanke M."/>
            <person name="Stinson E.O."/>
            <person name="Tubio J.M.C."/>
            <person name="Vanzee J.P."/>
            <person name="Verjovski-Almeida S."/>
            <person name="Werner D."/>
            <person name="White O.R."/>
            <person name="Wyder S."/>
            <person name="Zeng Q."/>
            <person name="Zhao Q."/>
            <person name="Zhao Y."/>
            <person name="Hill C.A."/>
            <person name="Raikhel A.S."/>
            <person name="Soares M.B."/>
            <person name="Knudson D.L."/>
            <person name="Lee N.H."/>
            <person name="Galagan J."/>
            <person name="Salzberg S.L."/>
            <person name="Paulsen I.T."/>
            <person name="Dimopoulos G."/>
            <person name="Collins F.H."/>
            <person name="Bruce B."/>
            <person name="Fraser-Liggett C.M."/>
            <person name="Severson D.W."/>
        </authorList>
    </citation>
    <scope>NUCLEOTIDE SEQUENCE [LARGE SCALE GENOMIC DNA]</scope>
    <source>
        <strain>LVPib12</strain>
    </source>
</reference>
<feature type="transit peptide" description="Mitochondrion" evidence="1">
    <location>
        <begin position="1"/>
        <end position="41"/>
    </location>
</feature>
<feature type="chain" id="PRO_0000414126" description="tRNA (guanine(37)-N(1))-methyltransferase">
    <location>
        <begin position="42"/>
        <end position="562"/>
    </location>
</feature>
<feature type="region of interest" description="Disordered" evidence="2">
    <location>
        <begin position="523"/>
        <end position="562"/>
    </location>
</feature>
<feature type="compositionally biased region" description="Basic and acidic residues" evidence="2">
    <location>
        <begin position="523"/>
        <end position="534"/>
    </location>
</feature>
<feature type="binding site" evidence="1">
    <location>
        <position position="243"/>
    </location>
    <ligand>
        <name>S-adenosyl-L-methionine</name>
        <dbReference type="ChEBI" id="CHEBI:59789"/>
    </ligand>
</feature>
<feature type="binding site" evidence="1">
    <location>
        <begin position="281"/>
        <end position="282"/>
    </location>
    <ligand>
        <name>S-adenosyl-L-methionine</name>
        <dbReference type="ChEBI" id="CHEBI:59789"/>
    </ligand>
</feature>
<feature type="binding site" evidence="1">
    <location>
        <position position="340"/>
    </location>
    <ligand>
        <name>S-adenosyl-L-methionine</name>
        <dbReference type="ChEBI" id="CHEBI:59789"/>
    </ligand>
</feature>
<gene>
    <name type="ORF">AAEL009603</name>
</gene>
<sequence>MLFRRFLNLTTKTPHLQTFRARHYFRNMSCPELIPPPTVRGMTVLDKGAFDKRISAPRLIVPRQLNFQQICSSVKKLLLKMECFKPVVSGEYKITLHPSAVKTWEDLKEIGLEDKGLTEENLVWEQMKLGYDNWRYDEILKAVLPEDKEALSAFSKVGHIVHLNLKEHLLPYKNLIGTVIKDKVVGCRAVVNKLVTIDNTYRNFQMELLCGEEDYQVSLKENGCIFEFDFSKVYWNSRLSTEHGRVVEMLKKGDVLLDVYAGVGPFSIPAAKKGYSVLANDLNPDSYKALVHNCAKNKVQGRITCFNKNGIDFIKEEIKQFIISKNQDDTFTGTIHITMNLPALAVEHLENYVGLLKDEQIELKHFPLVHVYCFAKGVEDNKLLARGLVEKNMGIPLGNNLKEIAFVRNVAPNKDMMRVSFYLTRQILCHNDIQLKRPTSETSHQDAKRKCNVLRKIATMGKRNIKNRNQQKQTAKKVKNVFAVNQSKKGNVKKAKEVTSKLKKINVQDKREKADKKFQDLHAHIVAKKPEKKPLPAKPASKKNKNQANTKQVEAGLDKMQM</sequence>
<protein>
    <recommendedName>
        <fullName evidence="1">tRNA (guanine(37)-N(1))-methyltransferase</fullName>
        <ecNumber evidence="1">2.1.1.228</ecNumber>
    </recommendedName>
    <alternativeName>
        <fullName evidence="1">M1G-methyltransferase</fullName>
    </alternativeName>
    <alternativeName>
        <fullName evidence="1">tRNA [GM37] methyltransferase</fullName>
    </alternativeName>
    <alternativeName>
        <fullName evidence="1">tRNA methyltransferase 5 homolog</fullName>
    </alternativeName>
</protein>
<comment type="function">
    <text evidence="1">Specifically methylates the N1 position of guanosine-37 in various cytoplasmic and mitochondrial tRNAs. Methylation is not dependent on the nature of the nucleoside 5' of the target nucleoside. This is the first step in the biosynthesis of wybutosine (yW), a modified base adjacent to the anticodon of tRNAs and required for accurate decoding.</text>
</comment>
<comment type="catalytic activity">
    <reaction evidence="1">
        <text>guanosine(37) in tRNA + S-adenosyl-L-methionine = N(1)-methylguanosine(37) in tRNA + S-adenosyl-L-homocysteine + H(+)</text>
        <dbReference type="Rhea" id="RHEA:36899"/>
        <dbReference type="Rhea" id="RHEA-COMP:10145"/>
        <dbReference type="Rhea" id="RHEA-COMP:10147"/>
        <dbReference type="ChEBI" id="CHEBI:15378"/>
        <dbReference type="ChEBI" id="CHEBI:57856"/>
        <dbReference type="ChEBI" id="CHEBI:59789"/>
        <dbReference type="ChEBI" id="CHEBI:73542"/>
        <dbReference type="ChEBI" id="CHEBI:74269"/>
        <dbReference type="EC" id="2.1.1.228"/>
    </reaction>
</comment>
<comment type="subunit">
    <text evidence="1">Monomer.</text>
</comment>
<comment type="subcellular location">
    <subcellularLocation>
        <location evidence="1">Mitochondrion matrix</location>
    </subcellularLocation>
    <subcellularLocation>
        <location evidence="1">Nucleus</location>
    </subcellularLocation>
    <subcellularLocation>
        <location evidence="1">Cytoplasm</location>
    </subcellularLocation>
    <text evidence="1">Predominantly in the mitochondria and in the nucleus.</text>
</comment>
<comment type="similarity">
    <text evidence="3">Belongs to the class I-like SAM-binding methyltransferase superfamily. TRM5/TYW2 family.</text>
</comment>
<dbReference type="EC" id="2.1.1.228" evidence="1"/>
<dbReference type="EMBL" id="CH477597">
    <property type="protein sequence ID" value="EAT38513.1"/>
    <property type="molecule type" value="Genomic_DNA"/>
</dbReference>
<dbReference type="RefSeq" id="XP_001653868.1">
    <property type="nucleotide sequence ID" value="XM_001653818.1"/>
</dbReference>
<dbReference type="SMR" id="Q16VC0"/>
<dbReference type="FunCoup" id="Q16VC0">
    <property type="interactions" value="1085"/>
</dbReference>
<dbReference type="STRING" id="7159.Q16VC0"/>
<dbReference type="PaxDb" id="7159-AAEL009603-PA"/>
<dbReference type="VEuPathDB" id="VectorBase:AAEL009603"/>
<dbReference type="eggNOG" id="KOG2078">
    <property type="taxonomic scope" value="Eukaryota"/>
</dbReference>
<dbReference type="HOGENOM" id="CLU_022610_2_3_1"/>
<dbReference type="InParanoid" id="Q16VC0"/>
<dbReference type="OMA" id="NWRYDEI"/>
<dbReference type="PhylomeDB" id="Q16VC0"/>
<dbReference type="Proteomes" id="UP000008820">
    <property type="component" value="Unassembled WGS sequence"/>
</dbReference>
<dbReference type="Proteomes" id="UP000682892">
    <property type="component" value="Unassembled WGS sequence"/>
</dbReference>
<dbReference type="GO" id="GO:0005759">
    <property type="term" value="C:mitochondrial matrix"/>
    <property type="evidence" value="ECO:0007669"/>
    <property type="project" value="UniProtKB-SubCell"/>
</dbReference>
<dbReference type="GO" id="GO:0005634">
    <property type="term" value="C:nucleus"/>
    <property type="evidence" value="ECO:0007669"/>
    <property type="project" value="UniProtKB-SubCell"/>
</dbReference>
<dbReference type="GO" id="GO:0052906">
    <property type="term" value="F:tRNA (guanine(37)-N1)-methyltransferase activity"/>
    <property type="evidence" value="ECO:0007669"/>
    <property type="project" value="UniProtKB-UniRule"/>
</dbReference>
<dbReference type="GO" id="GO:0070901">
    <property type="term" value="P:mitochondrial tRNA methylation"/>
    <property type="evidence" value="ECO:0007669"/>
    <property type="project" value="TreeGrafter"/>
</dbReference>
<dbReference type="GO" id="GO:0002939">
    <property type="term" value="P:tRNA N1-guanine methylation"/>
    <property type="evidence" value="ECO:0007669"/>
    <property type="project" value="TreeGrafter"/>
</dbReference>
<dbReference type="FunFam" id="3.30.300.110:FF:000001">
    <property type="entry name" value="tRNA (guanine(37)-N1)-methyltransferase"/>
    <property type="match status" value="1"/>
</dbReference>
<dbReference type="Gene3D" id="3.30.300.110">
    <property type="entry name" value="Met-10+ protein-like domains"/>
    <property type="match status" value="1"/>
</dbReference>
<dbReference type="Gene3D" id="3.40.50.150">
    <property type="entry name" value="Vaccinia Virus protein VP39"/>
    <property type="match status" value="1"/>
</dbReference>
<dbReference type="HAMAP" id="MF_03152">
    <property type="entry name" value="TRM5"/>
    <property type="match status" value="1"/>
</dbReference>
<dbReference type="InterPro" id="IPR030382">
    <property type="entry name" value="MeTrfase_TRM5/TYW2"/>
</dbReference>
<dbReference type="InterPro" id="IPR029063">
    <property type="entry name" value="SAM-dependent_MTases_sf"/>
</dbReference>
<dbReference type="InterPro" id="IPR056743">
    <property type="entry name" value="TRM5-TYW2-like_MTfase"/>
</dbReference>
<dbReference type="InterPro" id="IPR056744">
    <property type="entry name" value="TRM5/TYW2-like_N"/>
</dbReference>
<dbReference type="InterPro" id="IPR025792">
    <property type="entry name" value="tRNA_Gua_MeTrfase_euk"/>
</dbReference>
<dbReference type="PANTHER" id="PTHR23245:SF36">
    <property type="entry name" value="TRNA (GUANINE(37)-N1)-METHYLTRANSFERASE"/>
    <property type="match status" value="1"/>
</dbReference>
<dbReference type="PANTHER" id="PTHR23245">
    <property type="entry name" value="TRNA METHYLTRANSFERASE"/>
    <property type="match status" value="1"/>
</dbReference>
<dbReference type="Pfam" id="PF02475">
    <property type="entry name" value="TRM5-TYW2_MTfase"/>
    <property type="match status" value="1"/>
</dbReference>
<dbReference type="Pfam" id="PF25133">
    <property type="entry name" value="TYW2_N_2"/>
    <property type="match status" value="1"/>
</dbReference>
<dbReference type="SUPFAM" id="SSF53335">
    <property type="entry name" value="S-adenosyl-L-methionine-dependent methyltransferases"/>
    <property type="match status" value="1"/>
</dbReference>
<dbReference type="PROSITE" id="PS51684">
    <property type="entry name" value="SAM_MT_TRM5_TYW2"/>
    <property type="match status" value="1"/>
</dbReference>